<proteinExistence type="inferred from homology"/>
<gene>
    <name type="primary">RRF1</name>
    <name type="ordered locus">CAGL0F08943g</name>
</gene>
<accession>Q6FTT8</accession>
<dbReference type="EMBL" id="CR380952">
    <property type="protein sequence ID" value="CAG59280.1"/>
    <property type="molecule type" value="Genomic_DNA"/>
</dbReference>
<dbReference type="RefSeq" id="XP_446356.1">
    <property type="nucleotide sequence ID" value="XM_446356.1"/>
</dbReference>
<dbReference type="SMR" id="Q6FTT8"/>
<dbReference type="FunCoup" id="Q6FTT8">
    <property type="interactions" value="82"/>
</dbReference>
<dbReference type="STRING" id="284593.Q6FTT8"/>
<dbReference type="EnsemblFungi" id="CAGL0F08943g-T">
    <property type="protein sequence ID" value="CAGL0F08943g-T-p1"/>
    <property type="gene ID" value="CAGL0F08943g"/>
</dbReference>
<dbReference type="KEGG" id="cgr:2887851"/>
<dbReference type="CGD" id="CAL0131348">
    <property type="gene designation" value="CAGL0F08943g"/>
</dbReference>
<dbReference type="VEuPathDB" id="FungiDB:B1J91_F08943g"/>
<dbReference type="VEuPathDB" id="FungiDB:CAGL0F08943g"/>
<dbReference type="eggNOG" id="KOG4759">
    <property type="taxonomic scope" value="Eukaryota"/>
</dbReference>
<dbReference type="HOGENOM" id="CLU_085410_0_0_1"/>
<dbReference type="InParanoid" id="Q6FTT8"/>
<dbReference type="OMA" id="PNNDQQL"/>
<dbReference type="Proteomes" id="UP000002428">
    <property type="component" value="Chromosome F"/>
</dbReference>
<dbReference type="GO" id="GO:0005739">
    <property type="term" value="C:mitochondrion"/>
    <property type="evidence" value="ECO:0007669"/>
    <property type="project" value="UniProtKB-SubCell"/>
</dbReference>
<dbReference type="GO" id="GO:0043023">
    <property type="term" value="F:ribosomal large subunit binding"/>
    <property type="evidence" value="ECO:0007669"/>
    <property type="project" value="TreeGrafter"/>
</dbReference>
<dbReference type="GO" id="GO:0032543">
    <property type="term" value="P:mitochondrial translation"/>
    <property type="evidence" value="ECO:0007669"/>
    <property type="project" value="EnsemblFungi"/>
</dbReference>
<dbReference type="Gene3D" id="3.30.1360.40">
    <property type="match status" value="1"/>
</dbReference>
<dbReference type="Gene3D" id="1.10.132.20">
    <property type="entry name" value="Ribosome-recycling factor"/>
    <property type="match status" value="1"/>
</dbReference>
<dbReference type="InterPro" id="IPR002661">
    <property type="entry name" value="Ribosome_recyc_fac"/>
</dbReference>
<dbReference type="InterPro" id="IPR023584">
    <property type="entry name" value="Ribosome_recyc_fac_dom"/>
</dbReference>
<dbReference type="InterPro" id="IPR036191">
    <property type="entry name" value="RRF_sf"/>
</dbReference>
<dbReference type="PANTHER" id="PTHR20982:SF3">
    <property type="entry name" value="MITOCHONDRIAL RIBOSOME RECYCLING FACTOR PSEUDO 1"/>
    <property type="match status" value="1"/>
</dbReference>
<dbReference type="PANTHER" id="PTHR20982">
    <property type="entry name" value="RIBOSOME RECYCLING FACTOR"/>
    <property type="match status" value="1"/>
</dbReference>
<dbReference type="Pfam" id="PF01765">
    <property type="entry name" value="RRF"/>
    <property type="match status" value="1"/>
</dbReference>
<dbReference type="SUPFAM" id="SSF55194">
    <property type="entry name" value="Ribosome recycling factor, RRF"/>
    <property type="match status" value="1"/>
</dbReference>
<name>RRF1_CANGA</name>
<sequence>MLALRTSVGLTKNLFTRRLHISPVLLKKKPSHKGKGGPVEDEEIDIVNPSIYVDELVSKFDKSLELYSKELTDKRKGSVNANIFDNLSLKNGALFKEMASTTLKGKGSLLVTVFDPNEVKNIVSAILASGQNLNPERVPTNNQQLKIPLPPPTAESRQNLCKELKTVFEKYKQSPSKNSLGHIRNEVMKKLKSLQKKDESVKKIIQNVEKVHKDYVTKLSEQLKQAEKSVMGQ</sequence>
<protein>
    <recommendedName>
        <fullName>Ribosome-recycling factor, mitochondrial</fullName>
        <shortName>RRF</shortName>
    </recommendedName>
    <alternativeName>
        <fullName>Ribosome-releasing factor, mitochondrial</fullName>
    </alternativeName>
</protein>
<keyword id="KW-0496">Mitochondrion</keyword>
<keyword id="KW-0648">Protein biosynthesis</keyword>
<keyword id="KW-1185">Reference proteome</keyword>
<keyword id="KW-0809">Transit peptide</keyword>
<organism>
    <name type="scientific">Candida glabrata (strain ATCC 2001 / BCRC 20586 / JCM 3761 / NBRC 0622 / NRRL Y-65 / CBS 138)</name>
    <name type="common">Yeast</name>
    <name type="synonym">Nakaseomyces glabratus</name>
    <dbReference type="NCBI Taxonomy" id="284593"/>
    <lineage>
        <taxon>Eukaryota</taxon>
        <taxon>Fungi</taxon>
        <taxon>Dikarya</taxon>
        <taxon>Ascomycota</taxon>
        <taxon>Saccharomycotina</taxon>
        <taxon>Saccharomycetes</taxon>
        <taxon>Saccharomycetales</taxon>
        <taxon>Saccharomycetaceae</taxon>
        <taxon>Nakaseomyces</taxon>
    </lineage>
</organism>
<reference key="1">
    <citation type="journal article" date="2004" name="Nature">
        <title>Genome evolution in yeasts.</title>
        <authorList>
            <person name="Dujon B."/>
            <person name="Sherman D."/>
            <person name="Fischer G."/>
            <person name="Durrens P."/>
            <person name="Casaregola S."/>
            <person name="Lafontaine I."/>
            <person name="de Montigny J."/>
            <person name="Marck C."/>
            <person name="Neuveglise C."/>
            <person name="Talla E."/>
            <person name="Goffard N."/>
            <person name="Frangeul L."/>
            <person name="Aigle M."/>
            <person name="Anthouard V."/>
            <person name="Babour A."/>
            <person name="Barbe V."/>
            <person name="Barnay S."/>
            <person name="Blanchin S."/>
            <person name="Beckerich J.-M."/>
            <person name="Beyne E."/>
            <person name="Bleykasten C."/>
            <person name="Boisrame A."/>
            <person name="Boyer J."/>
            <person name="Cattolico L."/>
            <person name="Confanioleri F."/>
            <person name="de Daruvar A."/>
            <person name="Despons L."/>
            <person name="Fabre E."/>
            <person name="Fairhead C."/>
            <person name="Ferry-Dumazet H."/>
            <person name="Groppi A."/>
            <person name="Hantraye F."/>
            <person name="Hennequin C."/>
            <person name="Jauniaux N."/>
            <person name="Joyet P."/>
            <person name="Kachouri R."/>
            <person name="Kerrest A."/>
            <person name="Koszul R."/>
            <person name="Lemaire M."/>
            <person name="Lesur I."/>
            <person name="Ma L."/>
            <person name="Muller H."/>
            <person name="Nicaud J.-M."/>
            <person name="Nikolski M."/>
            <person name="Oztas S."/>
            <person name="Ozier-Kalogeropoulos O."/>
            <person name="Pellenz S."/>
            <person name="Potier S."/>
            <person name="Richard G.-F."/>
            <person name="Straub M.-L."/>
            <person name="Suleau A."/>
            <person name="Swennen D."/>
            <person name="Tekaia F."/>
            <person name="Wesolowski-Louvel M."/>
            <person name="Westhof E."/>
            <person name="Wirth B."/>
            <person name="Zeniou-Meyer M."/>
            <person name="Zivanovic Y."/>
            <person name="Bolotin-Fukuhara M."/>
            <person name="Thierry A."/>
            <person name="Bouchier C."/>
            <person name="Caudron B."/>
            <person name="Scarpelli C."/>
            <person name="Gaillardin C."/>
            <person name="Weissenbach J."/>
            <person name="Wincker P."/>
            <person name="Souciet J.-L."/>
        </authorList>
    </citation>
    <scope>NUCLEOTIDE SEQUENCE [LARGE SCALE GENOMIC DNA]</scope>
    <source>
        <strain>ATCC 2001 / BCRC 20586 / JCM 3761 / NBRC 0622 / NRRL Y-65 / CBS 138</strain>
    </source>
</reference>
<feature type="transit peptide" description="Mitochondrion" evidence="2">
    <location>
        <begin position="1"/>
        <end status="unknown"/>
    </location>
</feature>
<feature type="chain" id="PRO_0000031087" description="Ribosome-recycling factor, mitochondrial">
    <location>
        <begin status="unknown"/>
        <end position="233"/>
    </location>
</feature>
<comment type="function">
    <text evidence="1">Necessary for protein synthesis in mitochondria. Functions as a ribosome recycling factor in mitochondria (By similarity).</text>
</comment>
<comment type="subcellular location">
    <subcellularLocation>
        <location evidence="1">Mitochondrion</location>
    </subcellularLocation>
</comment>
<comment type="similarity">
    <text evidence="3">Belongs to the RRF family.</text>
</comment>
<evidence type="ECO:0000250" key="1"/>
<evidence type="ECO:0000255" key="2"/>
<evidence type="ECO:0000305" key="3"/>